<sequence>MSQLRKAPEGILGFPVAPFNREGKLEEEALYENIRFLLDEGLEAVFIACGSGEFQSLSTKEYEQMVEIAVSAADGKVPVYTGVGGNLSTALEWARISEEKGADGYLILPPYLIHGEQEGLYQYTKTIIESTDLNAIIYQRDNAVLTLEQIQRLTDLEQLVGLKDGIGDMALNISLSYTIGDRLGWLNGMPMAEVTMPAYAPIGFTSYSSAISNYIPHISRMFYEALLNGNDRLVKEIYEQVIIPINEIRKLRKGYAVSLIKAGMEIMGLHVKNTARPPIVPVEKEHCRQLENILKNAMARYPKTTAAL</sequence>
<protein>
    <recommendedName>
        <fullName evidence="1">Probable 5-dehydro-4-deoxyglucarate dehydratase</fullName>
        <ecNumber evidence="1">4.2.1.41</ecNumber>
    </recommendedName>
    <alternativeName>
        <fullName evidence="1">5-keto-4-deoxy-glucarate dehydratase</fullName>
        <shortName evidence="1">KDGDH</shortName>
    </alternativeName>
</protein>
<dbReference type="EC" id="4.2.1.41" evidence="1"/>
<dbReference type="EMBL" id="CP000002">
    <property type="protein sequence ID" value="AAU21891.2"/>
    <property type="molecule type" value="Genomic_DNA"/>
</dbReference>
<dbReference type="EMBL" id="AE017333">
    <property type="protein sequence ID" value="AAU39243.1"/>
    <property type="molecule type" value="Genomic_DNA"/>
</dbReference>
<dbReference type="SMR" id="Q65NX1"/>
<dbReference type="STRING" id="279010.BL01645"/>
<dbReference type="KEGG" id="bld:BLi00284"/>
<dbReference type="KEGG" id="bli:BL01645"/>
<dbReference type="PATRIC" id="fig|279010.13.peg.269"/>
<dbReference type="eggNOG" id="COG0329">
    <property type="taxonomic scope" value="Bacteria"/>
</dbReference>
<dbReference type="HOGENOM" id="CLU_049343_5_2_9"/>
<dbReference type="UniPathway" id="UPA00564">
    <property type="reaction ID" value="UER00628"/>
</dbReference>
<dbReference type="Proteomes" id="UP000000606">
    <property type="component" value="Chromosome"/>
</dbReference>
<dbReference type="GO" id="GO:0008840">
    <property type="term" value="F:4-hydroxy-tetrahydrodipicolinate synthase activity"/>
    <property type="evidence" value="ECO:0007669"/>
    <property type="project" value="TreeGrafter"/>
</dbReference>
<dbReference type="GO" id="GO:0047448">
    <property type="term" value="F:5-dehydro-4-deoxyglucarate dehydratase activity"/>
    <property type="evidence" value="ECO:0007669"/>
    <property type="project" value="UniProtKB-UniRule"/>
</dbReference>
<dbReference type="GO" id="GO:0042838">
    <property type="term" value="P:D-glucarate catabolic process"/>
    <property type="evidence" value="ECO:0007669"/>
    <property type="project" value="UniProtKB-UniRule"/>
</dbReference>
<dbReference type="CDD" id="cd00951">
    <property type="entry name" value="KDGDH"/>
    <property type="match status" value="1"/>
</dbReference>
<dbReference type="Gene3D" id="3.20.20.70">
    <property type="entry name" value="Aldolase class I"/>
    <property type="match status" value="1"/>
</dbReference>
<dbReference type="HAMAP" id="MF_00694">
    <property type="entry name" value="KDGDH"/>
    <property type="match status" value="1"/>
</dbReference>
<dbReference type="InterPro" id="IPR013785">
    <property type="entry name" value="Aldolase_TIM"/>
</dbReference>
<dbReference type="InterPro" id="IPR002220">
    <property type="entry name" value="DapA-like"/>
</dbReference>
<dbReference type="InterPro" id="IPR017655">
    <property type="entry name" value="Dehydro-deoxyglucarate_dehyd"/>
</dbReference>
<dbReference type="NCBIfam" id="TIGR03249">
    <property type="entry name" value="KdgD"/>
    <property type="match status" value="1"/>
</dbReference>
<dbReference type="NCBIfam" id="NF002958">
    <property type="entry name" value="PRK03620.1"/>
    <property type="match status" value="1"/>
</dbReference>
<dbReference type="PANTHER" id="PTHR12128:SF19">
    <property type="entry name" value="5-DEHYDRO-4-DEOXYGLUCARATE DEHYDRATASE 2-RELATED"/>
    <property type="match status" value="1"/>
</dbReference>
<dbReference type="PANTHER" id="PTHR12128">
    <property type="entry name" value="DIHYDRODIPICOLINATE SYNTHASE"/>
    <property type="match status" value="1"/>
</dbReference>
<dbReference type="Pfam" id="PF00701">
    <property type="entry name" value="DHDPS"/>
    <property type="match status" value="1"/>
</dbReference>
<dbReference type="PIRSF" id="PIRSF001365">
    <property type="entry name" value="DHDPS"/>
    <property type="match status" value="1"/>
</dbReference>
<dbReference type="SMART" id="SM01130">
    <property type="entry name" value="DHDPS"/>
    <property type="match status" value="1"/>
</dbReference>
<dbReference type="SUPFAM" id="SSF51569">
    <property type="entry name" value="Aldolase"/>
    <property type="match status" value="1"/>
</dbReference>
<keyword id="KW-0456">Lyase</keyword>
<keyword id="KW-1185">Reference proteome</keyword>
<organism>
    <name type="scientific">Bacillus licheniformis (strain ATCC 14580 / DSM 13 / JCM 2505 / CCUG 7422 / NBRC 12200 / NCIMB 9375 / NCTC 10341 / NRRL NRS-1264 / Gibson 46)</name>
    <dbReference type="NCBI Taxonomy" id="279010"/>
    <lineage>
        <taxon>Bacteria</taxon>
        <taxon>Bacillati</taxon>
        <taxon>Bacillota</taxon>
        <taxon>Bacilli</taxon>
        <taxon>Bacillales</taxon>
        <taxon>Bacillaceae</taxon>
        <taxon>Bacillus</taxon>
    </lineage>
</organism>
<gene>
    <name type="ordered locus">BLi00284</name>
    <name type="ordered locus">BL01645</name>
</gene>
<accession>Q65NX1</accession>
<accession>Q62ZB7</accession>
<feature type="chain" id="PRO_1000045399" description="Probable 5-dehydro-4-deoxyglucarate dehydratase">
    <location>
        <begin position="1"/>
        <end position="308"/>
    </location>
</feature>
<evidence type="ECO:0000255" key="1">
    <source>
        <dbReference type="HAMAP-Rule" id="MF_00694"/>
    </source>
</evidence>
<name>KDGD_BACLD</name>
<reference key="1">
    <citation type="journal article" date="2004" name="J. Mol. Microbiol. Biotechnol.">
        <title>The complete genome sequence of Bacillus licheniformis DSM13, an organism with great industrial potential.</title>
        <authorList>
            <person name="Veith B."/>
            <person name="Herzberg C."/>
            <person name="Steckel S."/>
            <person name="Feesche J."/>
            <person name="Maurer K.H."/>
            <person name="Ehrenreich P."/>
            <person name="Baeumer S."/>
            <person name="Henne A."/>
            <person name="Liesegang H."/>
            <person name="Merkl R."/>
            <person name="Ehrenreich A."/>
            <person name="Gottschalk G."/>
        </authorList>
    </citation>
    <scope>NUCLEOTIDE SEQUENCE [LARGE SCALE GENOMIC DNA]</scope>
    <source>
        <strain>ATCC 14580 / DSM 13 / JCM 2505 / CCUG 7422 / NBRC 12200 / NCIMB 9375 / NCTC 10341 / NRRL NRS-1264 / Gibson 46</strain>
    </source>
</reference>
<reference key="2">
    <citation type="journal article" date="2004" name="Genome Biol.">
        <title>Complete genome sequence of the industrial bacterium Bacillus licheniformis and comparisons with closely related Bacillus species.</title>
        <authorList>
            <person name="Rey M.W."/>
            <person name="Ramaiya P."/>
            <person name="Nelson B.A."/>
            <person name="Brody-Karpin S.D."/>
            <person name="Zaretsky E.J."/>
            <person name="Tang M."/>
            <person name="Lopez de Leon A."/>
            <person name="Xiang H."/>
            <person name="Gusti V."/>
            <person name="Clausen I.G."/>
            <person name="Olsen P.B."/>
            <person name="Rasmussen M.D."/>
            <person name="Andersen J.T."/>
            <person name="Joergensen P.L."/>
            <person name="Larsen T.S."/>
            <person name="Sorokin A."/>
            <person name="Bolotin A."/>
            <person name="Lapidus A."/>
            <person name="Galleron N."/>
            <person name="Ehrlich S.D."/>
            <person name="Berka R.M."/>
        </authorList>
    </citation>
    <scope>NUCLEOTIDE SEQUENCE [LARGE SCALE GENOMIC DNA]</scope>
    <source>
        <strain>ATCC 14580 / DSM 13 / JCM 2505 / CCUG 7422 / NBRC 12200 / NCIMB 9375 / NCTC 10341 / NRRL NRS-1264 / Gibson 46</strain>
    </source>
</reference>
<proteinExistence type="inferred from homology"/>
<comment type="catalytic activity">
    <reaction evidence="1">
        <text>5-dehydro-4-deoxy-D-glucarate + H(+) = 2,5-dioxopentanoate + CO2 + H2O</text>
        <dbReference type="Rhea" id="RHEA:24608"/>
        <dbReference type="ChEBI" id="CHEBI:15377"/>
        <dbReference type="ChEBI" id="CHEBI:15378"/>
        <dbReference type="ChEBI" id="CHEBI:16526"/>
        <dbReference type="ChEBI" id="CHEBI:42819"/>
        <dbReference type="ChEBI" id="CHEBI:58136"/>
        <dbReference type="EC" id="4.2.1.41"/>
    </reaction>
</comment>
<comment type="pathway">
    <text evidence="1">Carbohydrate acid metabolism; D-glucarate degradation; 2,5-dioxopentanoate from D-glucarate: step 2/2.</text>
</comment>
<comment type="similarity">
    <text evidence="1">Belongs to the DapA family.</text>
</comment>